<comment type="similarity">
    <text evidence="2">Belongs to the UPF0164 family.</text>
</comment>
<comment type="sequence caution" evidence="2">
    <conflict type="frameshift">
        <sequence resource="EMBL-CDS" id="AAC65832"/>
    </conflict>
    <text>Produces two separate ORFs.</text>
</comment>
<keyword id="KW-1185">Reference proteome</keyword>
<keyword id="KW-0732">Signal</keyword>
<accession>O83831</accession>
<accession>O83832</accession>
<sequence length="494" mass="52883">MVRRPCVSAAPVRVGGRLVFGFARVGSRGLCLGALLLSPRIVLAQHVADAPLGARGVVPRSSLPRRTRAARATTLRSRGGVVSSRASGGTLVVTAQKPKVMARNDVDYRPLSLQAGGRQGSLDLVATATADDASFFEANAAGSATIPRMTLAFFHTMRISDSHIDVLSFVGRAGRTGYGVSARAFYPDMSSKTTGFVGIFNVSHAFSSAYRFKGVSVGANLKVGYRHTRGGGSSQSKSSNGKENHHIVLTADVGVRGAWTVSKNFGAHEPNLWAGVAFRNIGASINATNLHGNNGAGGSGGGGGGNGDGKPAHVTDSRVILALAYQPVRYFLFGAGLEWLYNVGSIKAVNSLRYGAAFMLFPLRQLAFSSSVVMKGMGPQQVRASAGAEVQFSHVRCTASYSYLWSATPTRPHYVSIGVAGFLKPVPEQPLWQEVYRSYLRGLRHYHAQRYAEAIAEWKRTLQQGVSFEPAREGIERATKLLQLNQKVHDFNIF</sequence>
<feature type="signal peptide" evidence="1">
    <location>
        <begin position="1"/>
        <end position="44"/>
    </location>
</feature>
<feature type="chain" id="PRO_0000036219" description="UPF0164 protein TP_0859/TP_0860">
    <location>
        <begin position="45"/>
        <end position="494"/>
    </location>
</feature>
<evidence type="ECO:0000255" key="1"/>
<evidence type="ECO:0000305" key="2"/>
<protein>
    <recommendedName>
        <fullName>UPF0164 protein TP_0859/TP_0860</fullName>
    </recommendedName>
</protein>
<reference key="1">
    <citation type="journal article" date="1998" name="Science">
        <title>Complete genome sequence of Treponema pallidum, the syphilis spirochete.</title>
        <authorList>
            <person name="Fraser C.M."/>
            <person name="Norris S.J."/>
            <person name="Weinstock G.M."/>
            <person name="White O."/>
            <person name="Sutton G.G."/>
            <person name="Dodson R.J."/>
            <person name="Gwinn M.L."/>
            <person name="Hickey E.K."/>
            <person name="Clayton R.A."/>
            <person name="Ketchum K.A."/>
            <person name="Sodergren E."/>
            <person name="Hardham J.M."/>
            <person name="McLeod M.P."/>
            <person name="Salzberg S.L."/>
            <person name="Peterson J.D."/>
            <person name="Khalak H.G."/>
            <person name="Richardson D.L."/>
            <person name="Howell J.K."/>
            <person name="Chidambaram M."/>
            <person name="Utterback T.R."/>
            <person name="McDonald L.A."/>
            <person name="Artiach P."/>
            <person name="Bowman C."/>
            <person name="Cotton M.D."/>
            <person name="Fujii C."/>
            <person name="Garland S.A."/>
            <person name="Hatch B."/>
            <person name="Horst K."/>
            <person name="Roberts K.M."/>
            <person name="Sandusky M."/>
            <person name="Weidman J.F."/>
            <person name="Smith H.O."/>
            <person name="Venter J.C."/>
        </authorList>
    </citation>
    <scope>NUCLEOTIDE SEQUENCE [LARGE SCALE GENOMIC DNA]</scope>
    <source>
        <strain>Nichols</strain>
    </source>
</reference>
<proteinExistence type="inferred from homology"/>
<organism>
    <name type="scientific">Treponema pallidum (strain Nichols)</name>
    <dbReference type="NCBI Taxonomy" id="243276"/>
    <lineage>
        <taxon>Bacteria</taxon>
        <taxon>Pseudomonadati</taxon>
        <taxon>Spirochaetota</taxon>
        <taxon>Spirochaetia</taxon>
        <taxon>Spirochaetales</taxon>
        <taxon>Treponemataceae</taxon>
        <taxon>Treponema</taxon>
    </lineage>
</organism>
<name>Y859_TREPA</name>
<gene>
    <name type="ordered locus">TP_0859/TP_0860</name>
</gene>
<dbReference type="EMBL" id="AE000520">
    <property type="protein sequence ID" value="AAC65831.1"/>
    <property type="status" value="ALT_FRAME"/>
    <property type="molecule type" value="Genomic_DNA"/>
</dbReference>
<dbReference type="EMBL" id="AE000520">
    <property type="protein sequence ID" value="AAC65832.1"/>
    <property type="status" value="ALT_FRAME"/>
    <property type="molecule type" value="Genomic_DNA"/>
</dbReference>
<dbReference type="PIR" id="C71272">
    <property type="entry name" value="C71272"/>
</dbReference>
<dbReference type="PIR" id="D71272">
    <property type="entry name" value="D71272"/>
</dbReference>
<dbReference type="RefSeq" id="WP_014342835.1">
    <property type="nucleotide sequence ID" value="NC_021490.2"/>
</dbReference>
<dbReference type="IntAct" id="O83831">
    <property type="interactions" value="1"/>
</dbReference>
<dbReference type="STRING" id="243276.TP_0860"/>
<dbReference type="EnsemblBacteria" id="AAC65831">
    <property type="protein sequence ID" value="AAC65831"/>
    <property type="gene ID" value="TP_0859"/>
</dbReference>
<dbReference type="EnsemblBacteria" id="AAC65832">
    <property type="protein sequence ID" value="AAC65832"/>
    <property type="gene ID" value="TP_0860"/>
</dbReference>
<dbReference type="KEGG" id="tpa:TP_0859"/>
<dbReference type="KEGG" id="tpa:TP_0860"/>
<dbReference type="KEGG" id="tpw:TPANIC_0859"/>
<dbReference type="eggNOG" id="ENOG5033RFB">
    <property type="taxonomic scope" value="Bacteria"/>
</dbReference>
<dbReference type="HOGENOM" id="CLU_1194462_0_0_12"/>
<dbReference type="Proteomes" id="UP000000811">
    <property type="component" value="Chromosome"/>
</dbReference>
<dbReference type="InterPro" id="IPR005362">
    <property type="entry name" value="UPF0164"/>
</dbReference>
<dbReference type="Pfam" id="PF03687">
    <property type="entry name" value="UPF0164"/>
    <property type="match status" value="1"/>
</dbReference>